<proteinExistence type="evidence at protein level"/>
<keyword id="KW-0963">Cytoplasm</keyword>
<keyword id="KW-1185">Reference proteome</keyword>
<keyword id="KW-0808">Transferase</keyword>
<comment type="function">
    <text evidence="2 3">Sulfotransferase that utilizes 3'-phospho-5'-adenylyl sulfate (PAPS) as sulfonate donor to catalyze the sulfate conjugation of dopamine, small phenols such as 1-naphthol and p-nitrophenol and thyroid hormones, including 3,3'-diiodothyronine, triidothyronine (T3) and reverse triiodothyronine (rT3) (PubMed:11368519). May play a role in gut microbiota-host metabolic interaction. O-sulfonates 4-ethylphenol (4-EP), a dietary tyrosine-derived metabolite produced by gut bacteria. The product 4-EPS crosses the blood-brain barrier and may negatively regulate oligodendrocyte maturation and myelination, affecting the functional connectivity of different brain regions associated with the limbic system (By similarity).</text>
</comment>
<comment type="catalytic activity">
    <reaction evidence="3">
        <text>a phenol + 3'-phosphoadenylyl sulfate = an aryl sulfate + adenosine 3',5'-bisphosphate + H(+)</text>
        <dbReference type="Rhea" id="RHEA:12164"/>
        <dbReference type="ChEBI" id="CHEBI:15378"/>
        <dbReference type="ChEBI" id="CHEBI:33853"/>
        <dbReference type="ChEBI" id="CHEBI:58339"/>
        <dbReference type="ChEBI" id="CHEBI:58343"/>
        <dbReference type="ChEBI" id="CHEBI:140317"/>
        <dbReference type="EC" id="2.8.2.1"/>
    </reaction>
    <physiologicalReaction direction="left-to-right" evidence="5">
        <dbReference type="Rhea" id="RHEA:12165"/>
    </physiologicalReaction>
</comment>
<comment type="catalytic activity">
    <reaction evidence="3">
        <text>3,3',5-triiodo-L-thyronine + 3'-phosphoadenylyl sulfate = 3,3',5-triiodo-L-thyronine sulfate + adenosine 3',5'-bisphosphate + H(+)</text>
        <dbReference type="Rhea" id="RHEA:67876"/>
        <dbReference type="ChEBI" id="CHEBI:15378"/>
        <dbReference type="ChEBI" id="CHEBI:58339"/>
        <dbReference type="ChEBI" id="CHEBI:58343"/>
        <dbReference type="ChEBI" id="CHEBI:176511"/>
        <dbReference type="ChEBI" id="CHEBI:533015"/>
    </reaction>
    <physiologicalReaction direction="left-to-right" evidence="5">
        <dbReference type="Rhea" id="RHEA:67877"/>
    </physiologicalReaction>
</comment>
<comment type="catalytic activity">
    <reaction evidence="3">
        <text>3,3',5'-triiodo-L-thyronine + 3'-phosphoadenylyl sulfate = 3,3',5'-triiodo-L-thyronine sulfate + adenosine 3',5'-bisphosphate + H(+)</text>
        <dbReference type="Rhea" id="RHEA:67888"/>
        <dbReference type="ChEBI" id="CHEBI:15378"/>
        <dbReference type="ChEBI" id="CHEBI:57261"/>
        <dbReference type="ChEBI" id="CHEBI:58339"/>
        <dbReference type="ChEBI" id="CHEBI:58343"/>
        <dbReference type="ChEBI" id="CHEBI:176513"/>
    </reaction>
    <physiologicalReaction direction="left-to-right" evidence="5">
        <dbReference type="Rhea" id="RHEA:67889"/>
    </physiologicalReaction>
</comment>
<comment type="catalytic activity">
    <reaction evidence="3">
        <text>3,3'-diiodo-L-thyronine + 3'-phosphoadenylyl sulfate = 3,3'-diiodo-L-thyronine sulfate + adenosine 3',5'-bisphosphate + H(+)</text>
        <dbReference type="Rhea" id="RHEA:67892"/>
        <dbReference type="ChEBI" id="CHEBI:15378"/>
        <dbReference type="ChEBI" id="CHEBI:58339"/>
        <dbReference type="ChEBI" id="CHEBI:58343"/>
        <dbReference type="ChEBI" id="CHEBI:176514"/>
        <dbReference type="ChEBI" id="CHEBI:176515"/>
    </reaction>
    <physiologicalReaction direction="left-to-right" evidence="5">
        <dbReference type="Rhea" id="RHEA:67893"/>
    </physiologicalReaction>
</comment>
<comment type="catalytic activity">
    <reaction evidence="2">
        <text>4-ethylphenol + 3'-phosphoadenylyl sulfate = 4-ethylphenyl sulfate + adenosine 3',5'-bisphosphate + H(+)</text>
        <dbReference type="Rhea" id="RHEA:70607"/>
        <dbReference type="ChEBI" id="CHEBI:15378"/>
        <dbReference type="ChEBI" id="CHEBI:49584"/>
        <dbReference type="ChEBI" id="CHEBI:58339"/>
        <dbReference type="ChEBI" id="CHEBI:58343"/>
        <dbReference type="ChEBI" id="CHEBI:133681"/>
    </reaction>
    <physiologicalReaction direction="left-to-right" evidence="2">
        <dbReference type="Rhea" id="RHEA:70608"/>
    </physiologicalReaction>
</comment>
<comment type="biophysicochemical properties">
    <kinetics>
        <KM evidence="3">9.3 uM for 1-naphthol</KM>
        <KM evidence="3">37 uM for 3,3',5-triiodo-L-thyronine (T3)</KM>
        <KM evidence="3">33 uM for 3,3'-diiodo-L-thyronine (T2)</KM>
        <KM evidence="3">31 uM for 3,3',5'-triiodo-L-thyronine (rT3)</KM>
        <Vmax evidence="3">8.0 nmol/min/mg enzyme with 3,3'-diiodo-L-thyronine as substrate</Vmax>
        <Vmax evidence="3">5.1 nmol/min/mg enzyme with 3,3',5-triiodo-L-thyronine as substrate</Vmax>
        <Vmax evidence="3">0.45 nmol/min/mg enzyme with 3,3',5'-triiodo-L-thyronine as substrate</Vmax>
        <Vmax evidence="3">11.0 nmol/min/mg enzyme with 1-naphthol as substrate</Vmax>
    </kinetics>
</comment>
<comment type="subcellular location">
    <subcellularLocation>
        <location evidence="2">Cytoplasm</location>
    </subcellularLocation>
</comment>
<comment type="tissue specificity">
    <text evidence="3">Expressed highly in the colon, kidney and small intestine of male and female dogs. Highly expressed in the jejunum and ileum of the male dog than the female dog, which displayed more expression in duodenum (at protein level).</text>
</comment>
<comment type="miscellaneous">
    <text evidence="3">Contrary to other mammalian orthologs the canine SULT1B1 does not shown sulfotransferase activity toward dopamine.</text>
</comment>
<comment type="similarity">
    <text evidence="4">Belongs to the sulfotransferase 1 family.</text>
</comment>
<protein>
    <recommendedName>
        <fullName>Sulfotransferase 1B1</fullName>
        <shortName>ST1B1</shortName>
        <shortName>cSULT1B1</shortName>
        <ecNumber evidence="3">2.8.2.1</ecNumber>
    </recommendedName>
    <alternativeName>
        <fullName>Sulfotransferase family cytosolic 1B member 1</fullName>
    </alternativeName>
</protein>
<reference key="1">
    <citation type="journal article" date="2001" name="Arch. Biochem. Biophys.">
        <title>Molecular cloning, expression, and characterization of a canine sulfotransferase that is a human ST1B2 ortholog.</title>
        <authorList>
            <person name="Tsoi C."/>
            <person name="Falany C.N."/>
            <person name="Morgenstern R."/>
            <person name="Swedmark S."/>
        </authorList>
    </citation>
    <scope>NUCLEOTIDE SEQUENCE [MRNA]</scope>
    <scope>FUNCTION</scope>
    <scope>TISSUE SPECIFICITY</scope>
    <scope>CATALYTIC ACTIVITY</scope>
    <scope>BIOPHYSICOCHEMICAL PROPERTIES</scope>
    <source>
        <tissue>Liver</tissue>
    </source>
</reference>
<dbReference type="EC" id="2.8.2.1" evidence="3"/>
<dbReference type="EMBL" id="AY004332">
    <property type="protein sequence ID" value="AAF86583.1"/>
    <property type="molecule type" value="mRNA"/>
</dbReference>
<dbReference type="RefSeq" id="NP_001182764.1">
    <property type="nucleotide sequence ID" value="NM_001195835.2"/>
</dbReference>
<dbReference type="RefSeq" id="XP_038540442.1">
    <property type="nucleotide sequence ID" value="XM_038684514.1"/>
</dbReference>
<dbReference type="SMR" id="Q95JD5"/>
<dbReference type="FunCoup" id="Q95JD5">
    <property type="interactions" value="2"/>
</dbReference>
<dbReference type="STRING" id="9615.ENSCAFP00000004246"/>
<dbReference type="PaxDb" id="9612-ENSCAFP00000004246"/>
<dbReference type="Ensembl" id="ENSCAFT00000004591.5">
    <property type="protein sequence ID" value="ENSCAFP00000004246.2"/>
    <property type="gene ID" value="ENSCAFG00000002871.6"/>
</dbReference>
<dbReference type="Ensembl" id="ENSCAFT00040008330.1">
    <property type="protein sequence ID" value="ENSCAFP00040007237.1"/>
    <property type="gene ID" value="ENSCAFG00040004374.1"/>
</dbReference>
<dbReference type="Ensembl" id="ENSCAFT00845017670.1">
    <property type="protein sequence ID" value="ENSCAFP00845013756.1"/>
    <property type="gene ID" value="ENSCAFG00845010048.1"/>
</dbReference>
<dbReference type="GeneID" id="403636"/>
<dbReference type="KEGG" id="cfa:403636"/>
<dbReference type="CTD" id="27284"/>
<dbReference type="VEuPathDB" id="HostDB:ENSCAFG00845010048"/>
<dbReference type="VGNC" id="VGNC:46976">
    <property type="gene designation" value="SULT1B1"/>
</dbReference>
<dbReference type="eggNOG" id="KOG1584">
    <property type="taxonomic scope" value="Eukaryota"/>
</dbReference>
<dbReference type="GeneTree" id="ENSGT00940000161848"/>
<dbReference type="HOGENOM" id="CLU_027239_1_2_1"/>
<dbReference type="InParanoid" id="Q95JD5"/>
<dbReference type="OMA" id="IIYLCRE"/>
<dbReference type="OrthoDB" id="205623at2759"/>
<dbReference type="TreeFam" id="TF321745"/>
<dbReference type="Reactome" id="R-CFA-156584">
    <property type="pathway name" value="Cytosolic sulfonation of small molecules"/>
</dbReference>
<dbReference type="Proteomes" id="UP000002254">
    <property type="component" value="Chromosome 13"/>
</dbReference>
<dbReference type="Proteomes" id="UP000694429">
    <property type="component" value="Unplaced"/>
</dbReference>
<dbReference type="Proteomes" id="UP000694542">
    <property type="component" value="Chromosome 13"/>
</dbReference>
<dbReference type="Proteomes" id="UP000805418">
    <property type="component" value="Chromosome 13"/>
</dbReference>
<dbReference type="Bgee" id="ENSCAFG00000002871">
    <property type="expression patterns" value="Expressed in jejunum and 18 other cell types or tissues"/>
</dbReference>
<dbReference type="GO" id="GO:0005737">
    <property type="term" value="C:cytoplasm"/>
    <property type="evidence" value="ECO:0000318"/>
    <property type="project" value="GO_Central"/>
</dbReference>
<dbReference type="GO" id="GO:0004062">
    <property type="term" value="F:aryl sulfotransferase activity"/>
    <property type="evidence" value="ECO:0000314"/>
    <property type="project" value="UniProtKB"/>
</dbReference>
<dbReference type="GO" id="GO:0050427">
    <property type="term" value="P:3'-phosphoadenosine 5'-phosphosulfate metabolic process"/>
    <property type="evidence" value="ECO:0007669"/>
    <property type="project" value="Ensembl"/>
</dbReference>
<dbReference type="GO" id="GO:0030855">
    <property type="term" value="P:epithelial cell differentiation"/>
    <property type="evidence" value="ECO:0007669"/>
    <property type="project" value="Ensembl"/>
</dbReference>
<dbReference type="GO" id="GO:0006068">
    <property type="term" value="P:ethanol catabolic process"/>
    <property type="evidence" value="ECO:0007669"/>
    <property type="project" value="Ensembl"/>
</dbReference>
<dbReference type="GO" id="GO:0009812">
    <property type="term" value="P:flavonoid metabolic process"/>
    <property type="evidence" value="ECO:0007669"/>
    <property type="project" value="Ensembl"/>
</dbReference>
<dbReference type="GO" id="GO:0051923">
    <property type="term" value="P:sulfation"/>
    <property type="evidence" value="ECO:0000314"/>
    <property type="project" value="UniProtKB"/>
</dbReference>
<dbReference type="GO" id="GO:0042403">
    <property type="term" value="P:thyroid hormone metabolic process"/>
    <property type="evidence" value="ECO:0000314"/>
    <property type="project" value="UniProtKB"/>
</dbReference>
<dbReference type="GO" id="GO:0006805">
    <property type="term" value="P:xenobiotic metabolic process"/>
    <property type="evidence" value="ECO:0007669"/>
    <property type="project" value="Ensembl"/>
</dbReference>
<dbReference type="FunFam" id="3.40.50.300:FF:000433">
    <property type="entry name" value="Estrogen sulfotransferase"/>
    <property type="match status" value="1"/>
</dbReference>
<dbReference type="Gene3D" id="3.40.50.300">
    <property type="entry name" value="P-loop containing nucleotide triphosphate hydrolases"/>
    <property type="match status" value="1"/>
</dbReference>
<dbReference type="InterPro" id="IPR027417">
    <property type="entry name" value="P-loop_NTPase"/>
</dbReference>
<dbReference type="InterPro" id="IPR000863">
    <property type="entry name" value="Sulfotransferase_dom"/>
</dbReference>
<dbReference type="PANTHER" id="PTHR11783">
    <property type="entry name" value="SULFOTRANSFERASE SULT"/>
    <property type="match status" value="1"/>
</dbReference>
<dbReference type="Pfam" id="PF00685">
    <property type="entry name" value="Sulfotransfer_1"/>
    <property type="match status" value="1"/>
</dbReference>
<dbReference type="SUPFAM" id="SSF52540">
    <property type="entry name" value="P-loop containing nucleoside triphosphate hydrolases"/>
    <property type="match status" value="1"/>
</dbReference>
<organism>
    <name type="scientific">Canis lupus familiaris</name>
    <name type="common">Dog</name>
    <name type="synonym">Canis familiaris</name>
    <dbReference type="NCBI Taxonomy" id="9615"/>
    <lineage>
        <taxon>Eukaryota</taxon>
        <taxon>Metazoa</taxon>
        <taxon>Chordata</taxon>
        <taxon>Craniata</taxon>
        <taxon>Vertebrata</taxon>
        <taxon>Euteleostomi</taxon>
        <taxon>Mammalia</taxon>
        <taxon>Eutheria</taxon>
        <taxon>Laurasiatheria</taxon>
        <taxon>Carnivora</taxon>
        <taxon>Caniformia</taxon>
        <taxon>Canidae</taxon>
        <taxon>Canis</taxon>
    </lineage>
</organism>
<sequence>MISPKDFLRKNLKMIHGYPIIYTFANNWENIEQFHSRPDDIIIATYPKSGTTWVSEIVDMVLNNGDVEKCKRDFITVKVPMLEMAVPGLRTSGIEQLEKNPSPRLVKTHLPIALLPKSFWENNCKMIYLARNAKDVAVSYYHFDLMNNLEPAPGPWEEYLERFMTGNVAYGSWFNHVKSWWKKKEEHPILFLYYEDMKENPKREVQKIARFLEKNLNDEVLDKIIHHTSFEMMKDNPLVNYTHLPSTVMDHSKSSFMRKGIAGDWKNYFTVAQNEKFDVIYKKEMSGTTLQFRTEI</sequence>
<evidence type="ECO:0000250" key="1"/>
<evidence type="ECO:0000250" key="2">
    <source>
        <dbReference type="UniProtKB" id="O43704"/>
    </source>
</evidence>
<evidence type="ECO:0000269" key="3">
    <source>
    </source>
</evidence>
<evidence type="ECO:0000305" key="4"/>
<evidence type="ECO:0000305" key="5">
    <source>
    </source>
</evidence>
<accession>Q95JD5</accession>
<feature type="chain" id="PRO_0000085160" description="Sulfotransferase 1B1">
    <location>
        <begin position="1"/>
        <end position="296"/>
    </location>
</feature>
<feature type="active site" description="Proton acceptor" evidence="1">
    <location>
        <position position="109"/>
    </location>
</feature>
<feature type="binding site" evidence="2">
    <location>
        <begin position="48"/>
        <end position="53"/>
    </location>
    <ligand>
        <name>3'-phosphoadenylyl sulfate</name>
        <dbReference type="ChEBI" id="CHEBI:58339"/>
    </ligand>
</feature>
<feature type="binding site" evidence="1">
    <location>
        <begin position="107"/>
        <end position="109"/>
    </location>
    <ligand>
        <name>substrate</name>
    </ligand>
</feature>
<feature type="binding site" evidence="2">
    <location>
        <position position="131"/>
    </location>
    <ligand>
        <name>3'-phosphoadenylyl sulfate</name>
        <dbReference type="ChEBI" id="CHEBI:58339"/>
    </ligand>
</feature>
<feature type="binding site" evidence="2">
    <location>
        <position position="139"/>
    </location>
    <ligand>
        <name>3'-phosphoadenylyl sulfate</name>
        <dbReference type="ChEBI" id="CHEBI:58339"/>
    </ligand>
</feature>
<feature type="binding site" evidence="2">
    <location>
        <position position="194"/>
    </location>
    <ligand>
        <name>3'-phosphoadenylyl sulfate</name>
        <dbReference type="ChEBI" id="CHEBI:58339"/>
    </ligand>
</feature>
<feature type="binding site" evidence="2">
    <location>
        <begin position="228"/>
        <end position="233"/>
    </location>
    <ligand>
        <name>3'-phosphoadenylyl sulfate</name>
        <dbReference type="ChEBI" id="CHEBI:58339"/>
    </ligand>
</feature>
<feature type="binding site" evidence="2">
    <location>
        <begin position="258"/>
        <end position="260"/>
    </location>
    <ligand>
        <name>3'-phosphoadenylyl sulfate</name>
        <dbReference type="ChEBI" id="CHEBI:58339"/>
    </ligand>
</feature>
<name>ST1B1_CANLF</name>
<gene>
    <name type="primary">SULT1B1</name>
    <name type="synonym">ST1B2</name>
</gene>